<organism>
    <name type="scientific">Postia placenta (strain ATCC 44394 / Madison 698-R)</name>
    <name type="common">Brown rot fungus</name>
    <name type="synonym">Poria monticola</name>
    <dbReference type="NCBI Taxonomy" id="561896"/>
    <lineage>
        <taxon>Eukaryota</taxon>
        <taxon>Fungi</taxon>
        <taxon>Dikarya</taxon>
        <taxon>Basidiomycota</taxon>
        <taxon>Agaricomycotina</taxon>
        <taxon>Agaricomycetes</taxon>
        <taxon>Polyporales</taxon>
        <taxon>Adustoporiaceae</taxon>
        <taxon>Rhodonia</taxon>
    </lineage>
</organism>
<name>CY088_POSPM</name>
<sequence>MFLQIVTSVLATGLLYALISVLQQNRTLSASLPPGPPGHWLFGNAPPKAFPYRHFAELTETYGPVFTLRFGRRIVCVIGRYQAAVDILMKHSAETSDRPRSVAANEIMSKGHRVLMTPAGERLKKYRRALHAFLQPSSSATYKPMQYKNAKNYVLDCLHDGGHHLDHGRKYAASVVMSVAYGKTTPTSYSDPEVLQINKSLARLGAALKPGAYLVDTYPILKYCPGYASHLRRYREEELALITKQANAVRELLAKGEAPPSFTAYLIENQERLGISDDELAYLSGAIFGAGSDTTAAALGIMTMAAACYPEAQARVQAQLDEVVGRDRAPTFEDEDLLPEVTAFVLEAYRWRPVSAGGFSHRATKDVVWNGYVIPAGAEIIGNHWAISRDPEVYPNPEDFKPARWLNEHGRVRNDLKFTNFGFGRRVCVGQHVADQSLFINTALVLWAFIISQDAQCPIDTYAFTDTANVHPLPFSLHFEPRVKDMEAMLGAQAE</sequence>
<proteinExistence type="evidence at protein level"/>
<gene>
    <name evidence="5" type="primary">CYP088</name>
    <name evidence="5" type="synonym">CYP5152A3v2</name>
</gene>
<dbReference type="EC" id="1.-.-.-" evidence="4"/>
<dbReference type="EMBL" id="AB573293">
    <property type="protein sequence ID" value="BAK09426.1"/>
    <property type="molecule type" value="mRNA"/>
</dbReference>
<dbReference type="SMR" id="F1SY82"/>
<dbReference type="GlyCosmos" id="F1SY82">
    <property type="glycosylation" value="2 sites, No reported glycans"/>
</dbReference>
<dbReference type="GO" id="GO:0016020">
    <property type="term" value="C:membrane"/>
    <property type="evidence" value="ECO:0007669"/>
    <property type="project" value="UniProtKB-SubCell"/>
</dbReference>
<dbReference type="GO" id="GO:0020037">
    <property type="term" value="F:heme binding"/>
    <property type="evidence" value="ECO:0007669"/>
    <property type="project" value="InterPro"/>
</dbReference>
<dbReference type="GO" id="GO:0005506">
    <property type="term" value="F:iron ion binding"/>
    <property type="evidence" value="ECO:0007669"/>
    <property type="project" value="InterPro"/>
</dbReference>
<dbReference type="GO" id="GO:0004497">
    <property type="term" value="F:monooxygenase activity"/>
    <property type="evidence" value="ECO:0007669"/>
    <property type="project" value="UniProtKB-KW"/>
</dbReference>
<dbReference type="GO" id="GO:0016705">
    <property type="term" value="F:oxidoreductase activity, acting on paired donors, with incorporation or reduction of molecular oxygen"/>
    <property type="evidence" value="ECO:0007669"/>
    <property type="project" value="InterPro"/>
</dbReference>
<dbReference type="CDD" id="cd11065">
    <property type="entry name" value="CYP64-like"/>
    <property type="match status" value="1"/>
</dbReference>
<dbReference type="Gene3D" id="1.10.630.10">
    <property type="entry name" value="Cytochrome P450"/>
    <property type="match status" value="1"/>
</dbReference>
<dbReference type="InterPro" id="IPR001128">
    <property type="entry name" value="Cyt_P450"/>
</dbReference>
<dbReference type="InterPro" id="IPR017972">
    <property type="entry name" value="Cyt_P450_CS"/>
</dbReference>
<dbReference type="InterPro" id="IPR002401">
    <property type="entry name" value="Cyt_P450_E_grp-I"/>
</dbReference>
<dbReference type="InterPro" id="IPR036396">
    <property type="entry name" value="Cyt_P450_sf"/>
</dbReference>
<dbReference type="InterPro" id="IPR050364">
    <property type="entry name" value="Cytochrome_P450_fung"/>
</dbReference>
<dbReference type="PANTHER" id="PTHR46300:SF1">
    <property type="entry name" value="P450, PUTATIVE (EUROFUNG)-RELATED"/>
    <property type="match status" value="1"/>
</dbReference>
<dbReference type="PANTHER" id="PTHR46300">
    <property type="entry name" value="P450, PUTATIVE (EUROFUNG)-RELATED-RELATED"/>
    <property type="match status" value="1"/>
</dbReference>
<dbReference type="Pfam" id="PF00067">
    <property type="entry name" value="p450"/>
    <property type="match status" value="1"/>
</dbReference>
<dbReference type="PRINTS" id="PR00463">
    <property type="entry name" value="EP450I"/>
</dbReference>
<dbReference type="PRINTS" id="PR00385">
    <property type="entry name" value="P450"/>
</dbReference>
<dbReference type="SUPFAM" id="SSF48264">
    <property type="entry name" value="Cytochrome P450"/>
    <property type="match status" value="1"/>
</dbReference>
<dbReference type="PROSITE" id="PS00086">
    <property type="entry name" value="CYTOCHROME_P450"/>
    <property type="match status" value="1"/>
</dbReference>
<accession>F1SY82</accession>
<keyword id="KW-0325">Glycoprotein</keyword>
<keyword id="KW-0349">Heme</keyword>
<keyword id="KW-0408">Iron</keyword>
<keyword id="KW-0472">Membrane</keyword>
<keyword id="KW-0479">Metal-binding</keyword>
<keyword id="KW-0503">Monooxygenase</keyword>
<keyword id="KW-0560">Oxidoreductase</keyword>
<keyword id="KW-0812">Transmembrane</keyword>
<keyword id="KW-1133">Transmembrane helix</keyword>
<protein>
    <recommendedName>
        <fullName evidence="5">Cytochrome P450 monooxygenase 88</fullName>
        <ecNumber evidence="4">1.-.-.-</ecNumber>
    </recommendedName>
</protein>
<comment type="function">
    <text evidence="4">Cytochrome P450 monooxygenase that is able to use 4-ethoxybenzoic acid as a substrate for oxidation.</text>
</comment>
<comment type="cofactor">
    <cofactor evidence="1">
        <name>heme</name>
        <dbReference type="ChEBI" id="CHEBI:30413"/>
    </cofactor>
</comment>
<comment type="pathway">
    <text evidence="6">Secondary metabolite biosynthesis.</text>
</comment>
<comment type="subcellular location">
    <subcellularLocation>
        <location evidence="2">Membrane</location>
        <topology evidence="2">Single-pass membrane protein</topology>
    </subcellularLocation>
</comment>
<comment type="similarity">
    <text evidence="6">Belongs to the cytochrome P450 family.</text>
</comment>
<evidence type="ECO:0000250" key="1">
    <source>
        <dbReference type="UniProtKB" id="P04798"/>
    </source>
</evidence>
<evidence type="ECO:0000255" key="2"/>
<evidence type="ECO:0000255" key="3">
    <source>
        <dbReference type="PROSITE-ProRule" id="PRU00498"/>
    </source>
</evidence>
<evidence type="ECO:0000269" key="4">
    <source>
    </source>
</evidence>
<evidence type="ECO:0000303" key="5">
    <source>
    </source>
</evidence>
<evidence type="ECO:0000305" key="6"/>
<feature type="chain" id="PRO_0000451357" description="Cytochrome P450 monooxygenase 88">
    <location>
        <begin position="1"/>
        <end position="495"/>
    </location>
</feature>
<feature type="transmembrane region" description="Helical" evidence="2">
    <location>
        <begin position="2"/>
        <end position="22"/>
    </location>
</feature>
<feature type="binding site" description="axial binding residue" evidence="1">
    <location>
        <position position="428"/>
    </location>
    <ligand>
        <name>heme</name>
        <dbReference type="ChEBI" id="CHEBI:30413"/>
    </ligand>
    <ligandPart>
        <name>Fe</name>
        <dbReference type="ChEBI" id="CHEBI:18248"/>
    </ligandPart>
</feature>
<feature type="glycosylation site" description="N-linked (GlcNAc...) asparagine" evidence="3">
    <location>
        <position position="25"/>
    </location>
</feature>
<feature type="glycosylation site" description="N-linked (GlcNAc...) asparagine" evidence="3">
    <location>
        <position position="198"/>
    </location>
</feature>
<reference key="1">
    <citation type="journal article" date="2012" name="Arch. Microbiol.">
        <title>Molecular identification and functional characterization of cytochrome P450 monooxygenases from the brown-rot basidiomycete Postia placenta.</title>
        <authorList>
            <person name="Ide M."/>
            <person name="Ichinose H."/>
            <person name="Wariishi H."/>
        </authorList>
    </citation>
    <scope>NUCLEOTIDE SEQUENCE [MRNA]</scope>
    <scope>IDENTIFICATION</scope>
    <scope>FUNCTION</scope>
    <scope>CATALYTIC ACTIVITY</scope>
    <source>
        <strain>ATCC 44394 / Madison 698-R</strain>
    </source>
</reference>